<reference key="1">
    <citation type="journal article" date="1996" name="Science">
        <title>Complete genome sequence of the methanogenic archaeon, Methanococcus jannaschii.</title>
        <authorList>
            <person name="Bult C.J."/>
            <person name="White O."/>
            <person name="Olsen G.J."/>
            <person name="Zhou L."/>
            <person name="Fleischmann R.D."/>
            <person name="Sutton G.G."/>
            <person name="Blake J.A."/>
            <person name="FitzGerald L.M."/>
            <person name="Clayton R.A."/>
            <person name="Gocayne J.D."/>
            <person name="Kerlavage A.R."/>
            <person name="Dougherty B.A."/>
            <person name="Tomb J.-F."/>
            <person name="Adams M.D."/>
            <person name="Reich C.I."/>
            <person name="Overbeek R."/>
            <person name="Kirkness E.F."/>
            <person name="Weinstock K.G."/>
            <person name="Merrick J.M."/>
            <person name="Glodek A."/>
            <person name="Scott J.L."/>
            <person name="Geoghagen N.S.M."/>
            <person name="Weidman J.F."/>
            <person name="Fuhrmann J.L."/>
            <person name="Nguyen D."/>
            <person name="Utterback T.R."/>
            <person name="Kelley J.M."/>
            <person name="Peterson J.D."/>
            <person name="Sadow P.W."/>
            <person name="Hanna M.C."/>
            <person name="Cotton M.D."/>
            <person name="Roberts K.M."/>
            <person name="Hurst M.A."/>
            <person name="Kaine B.P."/>
            <person name="Borodovsky M."/>
            <person name="Klenk H.-P."/>
            <person name="Fraser C.M."/>
            <person name="Smith H.O."/>
            <person name="Woese C.R."/>
            <person name="Venter J.C."/>
        </authorList>
    </citation>
    <scope>NUCLEOTIDE SEQUENCE [LARGE SCALE GENOMIC DNA]</scope>
    <source>
        <strain>ATCC 43067 / DSM 2661 / JAL-1 / JCM 10045 / NBRC 100440</strain>
    </source>
</reference>
<accession>Q57855</accession>
<comment type="similarity">
    <text evidence="2">Belongs to the ABC transporter superfamily.</text>
</comment>
<sequence>MEKDDEVKKRDRMKVKLKVENLTKIFEFNGNRVKALDNINLEVYENEFLTVMGPSGCGKTTLLRIIAGLDYPTEGKVLLDGKEVKGPGADRGVVFQQYTLMPWRTVLKNVTFGLELKGIPKNERIEIAKKFIKMVGLEGFEDAYPYQLSGGMQQRVAIARTLANDPEIVLMDEPFAALDAQTRNILQNELLKIWQKEKKTVFFVTHSVDEAVYLSDRVVVLTARPGRIKEIVKIDLERPRDRTSIEFLEYRKKILNILKDEVLKSLK</sequence>
<organism>
    <name type="scientific">Methanocaldococcus jannaschii (strain ATCC 43067 / DSM 2661 / JAL-1 / JCM 10045 / NBRC 100440)</name>
    <name type="common">Methanococcus jannaschii</name>
    <dbReference type="NCBI Taxonomy" id="243232"/>
    <lineage>
        <taxon>Archaea</taxon>
        <taxon>Methanobacteriati</taxon>
        <taxon>Methanobacteriota</taxon>
        <taxon>Methanomada group</taxon>
        <taxon>Methanococci</taxon>
        <taxon>Methanococcales</taxon>
        <taxon>Methanocaldococcaceae</taxon>
        <taxon>Methanocaldococcus</taxon>
    </lineage>
</organism>
<proteinExistence type="inferred from homology"/>
<keyword id="KW-0067">ATP-binding</keyword>
<keyword id="KW-0547">Nucleotide-binding</keyword>
<keyword id="KW-1185">Reference proteome</keyword>
<keyword id="KW-0813">Transport</keyword>
<dbReference type="EMBL" id="L77117">
    <property type="protein sequence ID" value="AAB98401.1"/>
    <property type="molecule type" value="Genomic_DNA"/>
</dbReference>
<dbReference type="PIR" id="D64351">
    <property type="entry name" value="D64351"/>
</dbReference>
<dbReference type="SMR" id="Q57855"/>
<dbReference type="FunCoup" id="Q57855">
    <property type="interactions" value="36"/>
</dbReference>
<dbReference type="STRING" id="243232.MJ_0412"/>
<dbReference type="PaxDb" id="243232-MJ_0412"/>
<dbReference type="EnsemblBacteria" id="AAB98401">
    <property type="protein sequence ID" value="AAB98401"/>
    <property type="gene ID" value="MJ_0412"/>
</dbReference>
<dbReference type="KEGG" id="mja:MJ_0412"/>
<dbReference type="eggNOG" id="arCOG00193">
    <property type="taxonomic scope" value="Archaea"/>
</dbReference>
<dbReference type="HOGENOM" id="CLU_000604_1_22_2"/>
<dbReference type="InParanoid" id="Q57855"/>
<dbReference type="PhylomeDB" id="Q57855"/>
<dbReference type="Proteomes" id="UP000000805">
    <property type="component" value="Chromosome"/>
</dbReference>
<dbReference type="GO" id="GO:0005524">
    <property type="term" value="F:ATP binding"/>
    <property type="evidence" value="ECO:0007669"/>
    <property type="project" value="UniProtKB-KW"/>
</dbReference>
<dbReference type="GO" id="GO:0016887">
    <property type="term" value="F:ATP hydrolysis activity"/>
    <property type="evidence" value="ECO:0007669"/>
    <property type="project" value="InterPro"/>
</dbReference>
<dbReference type="CDD" id="cd03293">
    <property type="entry name" value="ABC_NrtD_SsuB_transporters"/>
    <property type="match status" value="1"/>
</dbReference>
<dbReference type="Gene3D" id="3.40.50.300">
    <property type="entry name" value="P-loop containing nucleotide triphosphate hydrolases"/>
    <property type="match status" value="1"/>
</dbReference>
<dbReference type="InterPro" id="IPR003593">
    <property type="entry name" value="AAA+_ATPase"/>
</dbReference>
<dbReference type="InterPro" id="IPR003439">
    <property type="entry name" value="ABC_transporter-like_ATP-bd"/>
</dbReference>
<dbReference type="InterPro" id="IPR017871">
    <property type="entry name" value="ABC_transporter-like_CS"/>
</dbReference>
<dbReference type="InterPro" id="IPR050166">
    <property type="entry name" value="ABC_transporter_ATP-bind"/>
</dbReference>
<dbReference type="InterPro" id="IPR027417">
    <property type="entry name" value="P-loop_NTPase"/>
</dbReference>
<dbReference type="PANTHER" id="PTHR42788:SF13">
    <property type="entry name" value="ALIPHATIC SULFONATES IMPORT ATP-BINDING PROTEIN SSUB"/>
    <property type="match status" value="1"/>
</dbReference>
<dbReference type="PANTHER" id="PTHR42788">
    <property type="entry name" value="TAURINE IMPORT ATP-BINDING PROTEIN-RELATED"/>
    <property type="match status" value="1"/>
</dbReference>
<dbReference type="Pfam" id="PF00005">
    <property type="entry name" value="ABC_tran"/>
    <property type="match status" value="1"/>
</dbReference>
<dbReference type="SMART" id="SM00382">
    <property type="entry name" value="AAA"/>
    <property type="match status" value="1"/>
</dbReference>
<dbReference type="SUPFAM" id="SSF52540">
    <property type="entry name" value="P-loop containing nucleoside triphosphate hydrolases"/>
    <property type="match status" value="1"/>
</dbReference>
<dbReference type="PROSITE" id="PS00211">
    <property type="entry name" value="ABC_TRANSPORTER_1"/>
    <property type="match status" value="1"/>
</dbReference>
<dbReference type="PROSITE" id="PS50893">
    <property type="entry name" value="ABC_TRANSPORTER_2"/>
    <property type="match status" value="1"/>
</dbReference>
<evidence type="ECO:0000255" key="1">
    <source>
        <dbReference type="PROSITE-ProRule" id="PRU00434"/>
    </source>
</evidence>
<evidence type="ECO:0000305" key="2"/>
<name>Y412_METJA</name>
<protein>
    <recommendedName>
        <fullName>Uncharacterized ABC transporter ATP-binding protein MJ0412</fullName>
    </recommendedName>
</protein>
<gene>
    <name type="ordered locus">MJ0412</name>
</gene>
<feature type="chain" id="PRO_0000093219" description="Uncharacterized ABC transporter ATP-binding protein MJ0412">
    <location>
        <begin position="1"/>
        <end position="267"/>
    </location>
</feature>
<feature type="domain" description="ABC transporter" evidence="1">
    <location>
        <begin position="17"/>
        <end position="248"/>
    </location>
</feature>
<feature type="binding site" evidence="1">
    <location>
        <begin position="53"/>
        <end position="60"/>
    </location>
    <ligand>
        <name>ATP</name>
        <dbReference type="ChEBI" id="CHEBI:30616"/>
    </ligand>
</feature>